<proteinExistence type="evidence at transcript level"/>
<gene>
    <name type="primary">CESA6</name>
    <name type="ordered locus">Os07g0252400</name>
    <name type="ordered locus">LOC_Os07g14850</name>
    <name evidence="7" type="ORF">OsJ_23733</name>
    <name type="ORF">P0669H03.13</name>
</gene>
<comment type="function">
    <text evidence="2">Probable catalytic subunit of cellulose synthase terminal complexes ('rosettes'), required for beta-1,4-glucan microfibril crystallization, a major mechanism of the cell wall formation.</text>
</comment>
<comment type="catalytic activity">
    <reaction evidence="6">
        <text>[(1-&gt;4)-beta-D-glucosyl](n) + UDP-alpha-D-glucose = [(1-&gt;4)-beta-D-glucosyl](n+1) + UDP + H(+)</text>
        <dbReference type="Rhea" id="RHEA:19929"/>
        <dbReference type="Rhea" id="RHEA-COMP:10033"/>
        <dbReference type="Rhea" id="RHEA-COMP:10034"/>
        <dbReference type="ChEBI" id="CHEBI:15378"/>
        <dbReference type="ChEBI" id="CHEBI:18246"/>
        <dbReference type="ChEBI" id="CHEBI:58223"/>
        <dbReference type="ChEBI" id="CHEBI:58885"/>
        <dbReference type="EC" id="2.4.1.12"/>
    </reaction>
</comment>
<comment type="cofactor">
    <cofactor evidence="1">
        <name>Mn(2+)</name>
        <dbReference type="ChEBI" id="CHEBI:29035"/>
    </cofactor>
</comment>
<comment type="cofactor">
    <cofactor evidence="2">
        <name>Zn(2+)</name>
        <dbReference type="ChEBI" id="CHEBI:29105"/>
    </cofactor>
    <text evidence="2">Binds 2 Zn(2+) ions per subunit.</text>
</comment>
<comment type="pathway">
    <text>Glycan metabolism; plant cellulose biosynthesis.</text>
</comment>
<comment type="subcellular location">
    <subcellularLocation>
        <location evidence="6">Cell membrane</location>
        <topology evidence="6">Multi-pass membrane protein</topology>
    </subcellularLocation>
</comment>
<comment type="similarity">
    <text evidence="6">Belongs to the glycosyltransferase 2 family. Plant cellulose synthase subfamily.</text>
</comment>
<feature type="chain" id="PRO_0000319366" description="Probable cellulose synthase A catalytic subunit 6 [UDP-forming]">
    <location>
        <begin position="1"/>
        <end position="1092"/>
    </location>
</feature>
<feature type="topological domain" description="Cytoplasmic" evidence="3">
    <location>
        <begin position="1"/>
        <end position="280"/>
    </location>
</feature>
<feature type="transmembrane region" description="Helical" evidence="3">
    <location>
        <begin position="281"/>
        <end position="301"/>
    </location>
</feature>
<feature type="topological domain" description="Extracellular" evidence="3">
    <location>
        <begin position="302"/>
        <end position="303"/>
    </location>
</feature>
<feature type="transmembrane region" description="Helical" evidence="3">
    <location>
        <begin position="304"/>
        <end position="324"/>
    </location>
</feature>
<feature type="topological domain" description="Cytoplasmic" evidence="3">
    <location>
        <begin position="325"/>
        <end position="868"/>
    </location>
</feature>
<feature type="transmembrane region" description="Helical" evidence="3">
    <location>
        <begin position="869"/>
        <end position="889"/>
    </location>
</feature>
<feature type="topological domain" description="Extracellular" evidence="3">
    <location>
        <begin position="890"/>
        <end position="901"/>
    </location>
</feature>
<feature type="transmembrane region" description="Helical" evidence="3">
    <location>
        <begin position="902"/>
        <end position="922"/>
    </location>
</feature>
<feature type="topological domain" description="Cytoplasmic" evidence="3">
    <location>
        <begin position="923"/>
        <end position="937"/>
    </location>
</feature>
<feature type="transmembrane region" description="Helical" evidence="3">
    <location>
        <begin position="938"/>
        <end position="958"/>
    </location>
</feature>
<feature type="topological domain" description="Extracellular" evidence="3">
    <location>
        <begin position="959"/>
        <end position="987"/>
    </location>
</feature>
<feature type="transmembrane region" description="Helical" evidence="3">
    <location>
        <begin position="988"/>
        <end position="1008"/>
    </location>
</feature>
<feature type="topological domain" description="Cytoplasmic" evidence="3">
    <location>
        <begin position="1009"/>
        <end position="1019"/>
    </location>
</feature>
<feature type="transmembrane region" description="Helical" evidence="3">
    <location>
        <begin position="1020"/>
        <end position="1040"/>
    </location>
</feature>
<feature type="topological domain" description="Extracellular" evidence="3">
    <location>
        <begin position="1041"/>
        <end position="1049"/>
    </location>
</feature>
<feature type="transmembrane region" description="Helical" evidence="3">
    <location>
        <begin position="1050"/>
        <end position="1070"/>
    </location>
</feature>
<feature type="topological domain" description="Cytoplasmic" evidence="3">
    <location>
        <begin position="1071"/>
        <end position="1092"/>
    </location>
</feature>
<feature type="zinc finger region" description="RING-type; degenerate" evidence="4">
    <location>
        <begin position="42"/>
        <end position="88"/>
    </location>
</feature>
<feature type="region of interest" description="Disordered" evidence="5">
    <location>
        <begin position="100"/>
        <end position="123"/>
    </location>
</feature>
<feature type="coiled-coil region" evidence="3">
    <location>
        <begin position="453"/>
        <end position="480"/>
    </location>
</feature>
<feature type="compositionally biased region" description="Acidic residues" evidence="5">
    <location>
        <begin position="103"/>
        <end position="116"/>
    </location>
</feature>
<feature type="active site" evidence="3">
    <location>
        <position position="399"/>
    </location>
</feature>
<feature type="active site" evidence="3">
    <location>
        <position position="792"/>
    </location>
</feature>
<feature type="binding site" evidence="2">
    <location>
        <position position="42"/>
    </location>
    <ligand>
        <name>Zn(2+)</name>
        <dbReference type="ChEBI" id="CHEBI:29105"/>
        <label>1</label>
    </ligand>
</feature>
<feature type="binding site" evidence="2">
    <location>
        <position position="45"/>
    </location>
    <ligand>
        <name>Zn(2+)</name>
        <dbReference type="ChEBI" id="CHEBI:29105"/>
        <label>1</label>
    </ligand>
</feature>
<feature type="binding site" evidence="2">
    <location>
        <position position="61"/>
    </location>
    <ligand>
        <name>Zn(2+)</name>
        <dbReference type="ChEBI" id="CHEBI:29105"/>
        <label>2</label>
    </ligand>
</feature>
<feature type="binding site" evidence="2">
    <location>
        <position position="64"/>
    </location>
    <ligand>
        <name>Zn(2+)</name>
        <dbReference type="ChEBI" id="CHEBI:29105"/>
        <label>2</label>
    </ligand>
</feature>
<feature type="binding site" evidence="2">
    <location>
        <position position="69"/>
    </location>
    <ligand>
        <name>Zn(2+)</name>
        <dbReference type="ChEBI" id="CHEBI:29105"/>
        <label>1</label>
    </ligand>
</feature>
<feature type="binding site" evidence="2">
    <location>
        <position position="72"/>
    </location>
    <ligand>
        <name>Zn(2+)</name>
        <dbReference type="ChEBI" id="CHEBI:29105"/>
        <label>1</label>
    </ligand>
</feature>
<feature type="binding site" evidence="2">
    <location>
        <position position="84"/>
    </location>
    <ligand>
        <name>Zn(2+)</name>
        <dbReference type="ChEBI" id="CHEBI:29105"/>
        <label>2</label>
    </ligand>
</feature>
<feature type="binding site" evidence="2">
    <location>
        <position position="87"/>
    </location>
    <ligand>
        <name>Zn(2+)</name>
        <dbReference type="ChEBI" id="CHEBI:29105"/>
        <label>2</label>
    </ligand>
</feature>
<feature type="binding site" evidence="1">
    <location>
        <position position="363"/>
    </location>
    <ligand>
        <name>UDP-alpha-D-glucose</name>
        <dbReference type="ChEBI" id="CHEBI:58885"/>
    </ligand>
</feature>
<feature type="binding site" evidence="1">
    <location>
        <position position="369"/>
    </location>
    <ligand>
        <name>UDP-alpha-D-glucose</name>
        <dbReference type="ChEBI" id="CHEBI:58885"/>
    </ligand>
</feature>
<feature type="binding site" evidence="1">
    <location>
        <position position="370"/>
    </location>
    <ligand>
        <name>UDP-alpha-D-glucose</name>
        <dbReference type="ChEBI" id="CHEBI:58885"/>
    </ligand>
</feature>
<feature type="binding site" evidence="1">
    <location>
        <position position="399"/>
    </location>
    <ligand>
        <name>UDP-alpha-D-glucose</name>
        <dbReference type="ChEBI" id="CHEBI:58885"/>
    </ligand>
</feature>
<feature type="binding site" evidence="1">
    <location>
        <position position="540"/>
    </location>
    <ligand>
        <name>UDP-alpha-D-glucose</name>
        <dbReference type="ChEBI" id="CHEBI:58885"/>
    </ligand>
</feature>
<feature type="binding site" evidence="1">
    <location>
        <position position="541"/>
    </location>
    <ligand>
        <name>Mn(2+)</name>
        <dbReference type="ChEBI" id="CHEBI:29035"/>
    </ligand>
</feature>
<feature type="binding site" evidence="1">
    <location>
        <position position="565"/>
    </location>
    <ligand>
        <name>Mn(2+)</name>
        <dbReference type="ChEBI" id="CHEBI:29035"/>
    </ligand>
</feature>
<feature type="sequence conflict" description="In Ref. 5; AK100914." evidence="6" ref="5">
    <original>T</original>
    <variation>A</variation>
    <location>
        <position position="412"/>
    </location>
</feature>
<evidence type="ECO:0000250" key="1">
    <source>
        <dbReference type="UniProtKB" id="Q941L0"/>
    </source>
</evidence>
<evidence type="ECO:0000250" key="2">
    <source>
        <dbReference type="UniProtKB" id="Q9SWW6"/>
    </source>
</evidence>
<evidence type="ECO:0000255" key="3"/>
<evidence type="ECO:0000255" key="4">
    <source>
        <dbReference type="PROSITE-ProRule" id="PRU00175"/>
    </source>
</evidence>
<evidence type="ECO:0000256" key="5">
    <source>
        <dbReference type="SAM" id="MobiDB-lite"/>
    </source>
</evidence>
<evidence type="ECO:0000305" key="6"/>
<evidence type="ECO:0000312" key="7">
    <source>
        <dbReference type="EMBL" id="EEE66900.1"/>
    </source>
</evidence>
<protein>
    <recommendedName>
        <fullName>Probable cellulose synthase A catalytic subunit 6 [UDP-forming]</fullName>
        <ecNumber evidence="6">2.4.1.12</ecNumber>
    </recommendedName>
    <alternativeName>
        <fullName>OsCesA6</fullName>
    </alternativeName>
</protein>
<name>CESA6_ORYSJ</name>
<sequence>MEASAGLVAGSHNRNELVVIRRDGGGGGGVGGRRAAEAKAACQICGDDVGEGPDGEPFVACNECAFPVCRNCYDYERREGSQACPQCKTRFKRLKGCPRVAGDEEEDGVDDLEGEFGLDGREDDPQYIAESMLRANMSYGRGGDLQPFQPIPNVPLLTNGQMVDDIPPEQHALVPSYMGGGGGGGKRIHPLPFADPSVPVQPRSMDPSKDLAAYGYGSVAWKERMEGWKQKQERMQQLRSEGGGDWDGDGDADLPLMDEARQPLSRKVPISSSRINPYRMIIIIRLVVLGFFFHYRVMHPVNDAFALWLISVICEIWFAMSWILDQFPKWLPIERETYLDRLSLRFDKEGQPSQLAPVDFFVSTVDPSKEPPLVTANTVLSILSVDYPVEKVSCYVSDDGAAMLTFEALSETSEFAKKWVPFCKKFNIEPRAPEWYFQQKIDYLKDKVAASFVRERRAMKRDYEEFKVRINALVAKAQKVPEEGWTMQDGSPWPGNNVRDHPGMIQVFLGQSGGRDVEGNELPRLVYVSREKRPGYNHHKKAGAMNALVRVSAVLSNAPYLLNLDCDHYINNSKAIREAMCFMMDPLVGKKVCYVQFPQRFDGIDRHDRYANRNVVFFDINMKGLDGIQGPIYVGTGCVFRRQALYGYDAPKTKKPPSRTCNCWPKWCCCCCCGNRHTKKKTTKPKPEKKKRLFFKKAENQSPAYALGEIEEGAPGAETDKAGIVNQQKLEKKFGQSSVFVASTLLENGGTLKSASPASLLKEAIHVISCGYEDKTDWGKEIGWIYGSITEDILTGFKMHCHGWRSIYCIPKRPAFKGSAPLNLSDRLHQVLRWALGSVEIFFSKHCPLWYGYGGGLKFLERFSYINSIVYPWTSIPLLAYCTLPAICLLTGKFITPELTNVASLWFMSLFICIFVTGILEMRWSGVAIDDWWRNEQFWVIGGVSSHLFAVFQGLLKVLAGVDTSFTVTSKAGDDEEFSELYTFKWTTLLIPPTTLLLLNFIGVVAGVSNAINNGYESWGPLFGKLFFAFWVIVHLYPFLKGLVGRQNRTPTIVIVWSILLASIFSLLWVRIDPFLAKNNGPLLEECGLDCN</sequence>
<reference key="1">
    <citation type="journal article" date="2005" name="Nature">
        <title>The map-based sequence of the rice genome.</title>
        <authorList>
            <consortium name="International rice genome sequencing project (IRGSP)"/>
        </authorList>
    </citation>
    <scope>NUCLEOTIDE SEQUENCE [LARGE SCALE GENOMIC DNA]</scope>
    <source>
        <strain>cv. Nipponbare</strain>
    </source>
</reference>
<reference key="2">
    <citation type="journal article" date="2008" name="Nucleic Acids Res.">
        <title>The rice annotation project database (RAP-DB): 2008 update.</title>
        <authorList>
            <consortium name="The rice annotation project (RAP)"/>
        </authorList>
    </citation>
    <scope>GENOME REANNOTATION</scope>
    <source>
        <strain>cv. Nipponbare</strain>
    </source>
</reference>
<reference key="3">
    <citation type="journal article" date="2013" name="Rice">
        <title>Improvement of the Oryza sativa Nipponbare reference genome using next generation sequence and optical map data.</title>
        <authorList>
            <person name="Kawahara Y."/>
            <person name="de la Bastide M."/>
            <person name="Hamilton J.P."/>
            <person name="Kanamori H."/>
            <person name="McCombie W.R."/>
            <person name="Ouyang S."/>
            <person name="Schwartz D.C."/>
            <person name="Tanaka T."/>
            <person name="Wu J."/>
            <person name="Zhou S."/>
            <person name="Childs K.L."/>
            <person name="Davidson R.M."/>
            <person name="Lin H."/>
            <person name="Quesada-Ocampo L."/>
            <person name="Vaillancourt B."/>
            <person name="Sakai H."/>
            <person name="Lee S.S."/>
            <person name="Kim J."/>
            <person name="Numa H."/>
            <person name="Itoh T."/>
            <person name="Buell C.R."/>
            <person name="Matsumoto T."/>
        </authorList>
    </citation>
    <scope>GENOME REANNOTATION</scope>
    <source>
        <strain>cv. Nipponbare</strain>
    </source>
</reference>
<reference key="4">
    <citation type="journal article" date="2005" name="PLoS Biol.">
        <title>The genomes of Oryza sativa: a history of duplications.</title>
        <authorList>
            <person name="Yu J."/>
            <person name="Wang J."/>
            <person name="Lin W."/>
            <person name="Li S."/>
            <person name="Li H."/>
            <person name="Zhou J."/>
            <person name="Ni P."/>
            <person name="Dong W."/>
            <person name="Hu S."/>
            <person name="Zeng C."/>
            <person name="Zhang J."/>
            <person name="Zhang Y."/>
            <person name="Li R."/>
            <person name="Xu Z."/>
            <person name="Li S."/>
            <person name="Li X."/>
            <person name="Zheng H."/>
            <person name="Cong L."/>
            <person name="Lin L."/>
            <person name="Yin J."/>
            <person name="Geng J."/>
            <person name="Li G."/>
            <person name="Shi J."/>
            <person name="Liu J."/>
            <person name="Lv H."/>
            <person name="Li J."/>
            <person name="Wang J."/>
            <person name="Deng Y."/>
            <person name="Ran L."/>
            <person name="Shi X."/>
            <person name="Wang X."/>
            <person name="Wu Q."/>
            <person name="Li C."/>
            <person name="Ren X."/>
            <person name="Wang J."/>
            <person name="Wang X."/>
            <person name="Li D."/>
            <person name="Liu D."/>
            <person name="Zhang X."/>
            <person name="Ji Z."/>
            <person name="Zhao W."/>
            <person name="Sun Y."/>
            <person name="Zhang Z."/>
            <person name="Bao J."/>
            <person name="Han Y."/>
            <person name="Dong L."/>
            <person name="Ji J."/>
            <person name="Chen P."/>
            <person name="Wu S."/>
            <person name="Liu J."/>
            <person name="Xiao Y."/>
            <person name="Bu D."/>
            <person name="Tan J."/>
            <person name="Yang L."/>
            <person name="Ye C."/>
            <person name="Zhang J."/>
            <person name="Xu J."/>
            <person name="Zhou Y."/>
            <person name="Yu Y."/>
            <person name="Zhang B."/>
            <person name="Zhuang S."/>
            <person name="Wei H."/>
            <person name="Liu B."/>
            <person name="Lei M."/>
            <person name="Yu H."/>
            <person name="Li Y."/>
            <person name="Xu H."/>
            <person name="Wei S."/>
            <person name="He X."/>
            <person name="Fang L."/>
            <person name="Zhang Z."/>
            <person name="Zhang Y."/>
            <person name="Huang X."/>
            <person name="Su Z."/>
            <person name="Tong W."/>
            <person name="Li J."/>
            <person name="Tong Z."/>
            <person name="Li S."/>
            <person name="Ye J."/>
            <person name="Wang L."/>
            <person name="Fang L."/>
            <person name="Lei T."/>
            <person name="Chen C.-S."/>
            <person name="Chen H.-C."/>
            <person name="Xu Z."/>
            <person name="Li H."/>
            <person name="Huang H."/>
            <person name="Zhang F."/>
            <person name="Xu H."/>
            <person name="Li N."/>
            <person name="Zhao C."/>
            <person name="Li S."/>
            <person name="Dong L."/>
            <person name="Huang Y."/>
            <person name="Li L."/>
            <person name="Xi Y."/>
            <person name="Qi Q."/>
            <person name="Li W."/>
            <person name="Zhang B."/>
            <person name="Hu W."/>
            <person name="Zhang Y."/>
            <person name="Tian X."/>
            <person name="Jiao Y."/>
            <person name="Liang X."/>
            <person name="Jin J."/>
            <person name="Gao L."/>
            <person name="Zheng W."/>
            <person name="Hao B."/>
            <person name="Liu S.-M."/>
            <person name="Wang W."/>
            <person name="Yuan L."/>
            <person name="Cao M."/>
            <person name="McDermott J."/>
            <person name="Samudrala R."/>
            <person name="Wang J."/>
            <person name="Wong G.K.-S."/>
            <person name="Yang H."/>
        </authorList>
    </citation>
    <scope>NUCLEOTIDE SEQUENCE [LARGE SCALE GENOMIC DNA]</scope>
    <source>
        <strain>cv. Nipponbare</strain>
    </source>
</reference>
<reference key="5">
    <citation type="journal article" date="2003" name="Science">
        <title>Collection, mapping, and annotation of over 28,000 cDNA clones from japonica rice.</title>
        <authorList>
            <consortium name="The rice full-length cDNA consortium"/>
        </authorList>
    </citation>
    <scope>NUCLEOTIDE SEQUENCE [LARGE SCALE MRNA]</scope>
    <source>
        <strain>cv. Nipponbare</strain>
    </source>
</reference>
<accession>Q6YVM4</accession>
<accession>B9FWG3</accession>
<organism>
    <name type="scientific">Oryza sativa subsp. japonica</name>
    <name type="common">Rice</name>
    <dbReference type="NCBI Taxonomy" id="39947"/>
    <lineage>
        <taxon>Eukaryota</taxon>
        <taxon>Viridiplantae</taxon>
        <taxon>Streptophyta</taxon>
        <taxon>Embryophyta</taxon>
        <taxon>Tracheophyta</taxon>
        <taxon>Spermatophyta</taxon>
        <taxon>Magnoliopsida</taxon>
        <taxon>Liliopsida</taxon>
        <taxon>Poales</taxon>
        <taxon>Poaceae</taxon>
        <taxon>BOP clade</taxon>
        <taxon>Oryzoideae</taxon>
        <taxon>Oryzeae</taxon>
        <taxon>Oryzinae</taxon>
        <taxon>Oryza</taxon>
        <taxon>Oryza sativa</taxon>
    </lineage>
</organism>
<keyword id="KW-1003">Cell membrane</keyword>
<keyword id="KW-0961">Cell wall biogenesis/degradation</keyword>
<keyword id="KW-0135">Cellulose biosynthesis</keyword>
<keyword id="KW-0175">Coiled coil</keyword>
<keyword id="KW-0328">Glycosyltransferase</keyword>
<keyword id="KW-0464">Manganese</keyword>
<keyword id="KW-0472">Membrane</keyword>
<keyword id="KW-0479">Metal-binding</keyword>
<keyword id="KW-1185">Reference proteome</keyword>
<keyword id="KW-0808">Transferase</keyword>
<keyword id="KW-0812">Transmembrane</keyword>
<keyword id="KW-1133">Transmembrane helix</keyword>
<keyword id="KW-0862">Zinc</keyword>
<keyword id="KW-0863">Zinc-finger</keyword>
<dbReference type="EC" id="2.4.1.12" evidence="6"/>
<dbReference type="EMBL" id="AP005824">
    <property type="protein sequence ID" value="BAC84511.1"/>
    <property type="molecule type" value="Genomic_DNA"/>
</dbReference>
<dbReference type="EMBL" id="AP008213">
    <property type="protein sequence ID" value="BAF21217.1"/>
    <property type="molecule type" value="Genomic_DNA"/>
</dbReference>
<dbReference type="EMBL" id="AP014963">
    <property type="protein sequence ID" value="BAT00852.1"/>
    <property type="molecule type" value="Genomic_DNA"/>
</dbReference>
<dbReference type="EMBL" id="CM000144">
    <property type="protein sequence ID" value="EEE66900.1"/>
    <property type="molecule type" value="Genomic_DNA"/>
</dbReference>
<dbReference type="EMBL" id="AK100914">
    <property type="status" value="NOT_ANNOTATED_CDS"/>
    <property type="molecule type" value="mRNA"/>
</dbReference>
<dbReference type="RefSeq" id="XP_015647044.1">
    <property type="nucleotide sequence ID" value="XM_015791558.1"/>
</dbReference>
<dbReference type="SMR" id="Q6YVM4"/>
<dbReference type="FunCoup" id="Q6YVM4">
    <property type="interactions" value="160"/>
</dbReference>
<dbReference type="STRING" id="39947.Q6YVM4"/>
<dbReference type="CAZy" id="GT2">
    <property type="family name" value="Glycosyltransferase Family 2"/>
</dbReference>
<dbReference type="PaxDb" id="39947-Q6YVM4"/>
<dbReference type="EnsemblPlants" id="Os07t0252400-01">
    <property type="protein sequence ID" value="Os07t0252400-01"/>
    <property type="gene ID" value="Os07g0252400"/>
</dbReference>
<dbReference type="Gramene" id="Os07t0252400-01">
    <property type="protein sequence ID" value="Os07t0252400-01"/>
    <property type="gene ID" value="Os07g0252400"/>
</dbReference>
<dbReference type="KEGG" id="dosa:Os07g0252400"/>
<dbReference type="eggNOG" id="ENOG502QQGG">
    <property type="taxonomic scope" value="Eukaryota"/>
</dbReference>
<dbReference type="HOGENOM" id="CLU_001418_0_1_1"/>
<dbReference type="InParanoid" id="Q6YVM4"/>
<dbReference type="OMA" id="ISWVEND"/>
<dbReference type="OrthoDB" id="72851at2759"/>
<dbReference type="UniPathway" id="UPA00695"/>
<dbReference type="Proteomes" id="UP000000763">
    <property type="component" value="Chromosome 7"/>
</dbReference>
<dbReference type="Proteomes" id="UP000007752">
    <property type="component" value="Chromosome 7"/>
</dbReference>
<dbReference type="Proteomes" id="UP000059680">
    <property type="component" value="Chromosome 7"/>
</dbReference>
<dbReference type="ExpressionAtlas" id="Q6YVM4">
    <property type="expression patterns" value="baseline and differential"/>
</dbReference>
<dbReference type="GO" id="GO:0005886">
    <property type="term" value="C:plasma membrane"/>
    <property type="evidence" value="ECO:0000318"/>
    <property type="project" value="GO_Central"/>
</dbReference>
<dbReference type="GO" id="GO:0016760">
    <property type="term" value="F:cellulose synthase (UDP-forming) activity"/>
    <property type="evidence" value="ECO:0007669"/>
    <property type="project" value="UniProtKB-EC"/>
</dbReference>
<dbReference type="GO" id="GO:0016759">
    <property type="term" value="F:cellulose synthase activity"/>
    <property type="evidence" value="ECO:0000318"/>
    <property type="project" value="GO_Central"/>
</dbReference>
<dbReference type="GO" id="GO:0008270">
    <property type="term" value="F:zinc ion binding"/>
    <property type="evidence" value="ECO:0007669"/>
    <property type="project" value="UniProtKB-KW"/>
</dbReference>
<dbReference type="GO" id="GO:0071555">
    <property type="term" value="P:cell wall organization"/>
    <property type="evidence" value="ECO:0007669"/>
    <property type="project" value="UniProtKB-KW"/>
</dbReference>
<dbReference type="GO" id="GO:0030244">
    <property type="term" value="P:cellulose biosynthetic process"/>
    <property type="evidence" value="ECO:0000318"/>
    <property type="project" value="GO_Central"/>
</dbReference>
<dbReference type="GO" id="GO:0009833">
    <property type="term" value="P:plant-type primary cell wall biogenesis"/>
    <property type="evidence" value="ECO:0000318"/>
    <property type="project" value="GO_Central"/>
</dbReference>
<dbReference type="CDD" id="cd16617">
    <property type="entry name" value="mRING-HC-C4C4_CesA"/>
    <property type="match status" value="1"/>
</dbReference>
<dbReference type="FunFam" id="3.90.550.10:FF:000009">
    <property type="entry name" value="Cellulose synthase"/>
    <property type="match status" value="1"/>
</dbReference>
<dbReference type="Gene3D" id="3.90.550.10">
    <property type="entry name" value="Spore Coat Polysaccharide Biosynthesis Protein SpsA, Chain A"/>
    <property type="match status" value="1"/>
</dbReference>
<dbReference type="Gene3D" id="3.30.40.10">
    <property type="entry name" value="Zinc/RING finger domain, C3HC4 (zinc finger)"/>
    <property type="match status" value="1"/>
</dbReference>
<dbReference type="InterPro" id="IPR005150">
    <property type="entry name" value="Cellulose_synth"/>
</dbReference>
<dbReference type="InterPro" id="IPR027934">
    <property type="entry name" value="CES_Znf_RING"/>
</dbReference>
<dbReference type="InterPro" id="IPR029044">
    <property type="entry name" value="Nucleotide-diphossugar_trans"/>
</dbReference>
<dbReference type="InterPro" id="IPR001841">
    <property type="entry name" value="Znf_RING"/>
</dbReference>
<dbReference type="InterPro" id="IPR013083">
    <property type="entry name" value="Znf_RING/FYVE/PHD"/>
</dbReference>
<dbReference type="PANTHER" id="PTHR13301">
    <property type="entry name" value="X-BOX TRANSCRIPTION FACTOR-RELATED"/>
    <property type="match status" value="1"/>
</dbReference>
<dbReference type="Pfam" id="PF03552">
    <property type="entry name" value="Cellulose_synt"/>
    <property type="match status" value="1"/>
</dbReference>
<dbReference type="Pfam" id="PF14569">
    <property type="entry name" value="zf-UDP"/>
    <property type="match status" value="1"/>
</dbReference>
<dbReference type="SUPFAM" id="SSF53448">
    <property type="entry name" value="Nucleotide-diphospho-sugar transferases"/>
    <property type="match status" value="1"/>
</dbReference>
<dbReference type="SUPFAM" id="SSF57850">
    <property type="entry name" value="RING/U-box"/>
    <property type="match status" value="1"/>
</dbReference>
<dbReference type="PROSITE" id="PS50089">
    <property type="entry name" value="ZF_RING_2"/>
    <property type="match status" value="1"/>
</dbReference>